<name>RL35_ACIF5</name>
<keyword id="KW-0687">Ribonucleoprotein</keyword>
<keyword id="KW-0689">Ribosomal protein</keyword>
<comment type="similarity">
    <text evidence="1">Belongs to the bacterial ribosomal protein bL35 family.</text>
</comment>
<gene>
    <name evidence="1" type="primary">rpmI</name>
    <name type="ordered locus">Lferr_2241</name>
</gene>
<protein>
    <recommendedName>
        <fullName evidence="1">Large ribosomal subunit protein bL35</fullName>
    </recommendedName>
    <alternativeName>
        <fullName evidence="3">50S ribosomal protein L35</fullName>
    </alternativeName>
</protein>
<sequence length="65" mass="7533">MPKMKSNRGAAKRFKRTGSGKFKHRQAFLNHILTKKTTKRKRHLRHTLVTSGSDQAALRRMLPYG</sequence>
<reference key="1">
    <citation type="submission" date="2008-08" db="EMBL/GenBank/DDBJ databases">
        <title>Complete sequence of Acidithiobacillus ferrooxidans ATCC 53993.</title>
        <authorList>
            <person name="Lucas S."/>
            <person name="Copeland A."/>
            <person name="Lapidus A."/>
            <person name="Glavina del Rio T."/>
            <person name="Dalin E."/>
            <person name="Tice H."/>
            <person name="Bruce D."/>
            <person name="Goodwin L."/>
            <person name="Pitluck S."/>
            <person name="Sims D."/>
            <person name="Brettin T."/>
            <person name="Detter J.C."/>
            <person name="Han C."/>
            <person name="Kuske C.R."/>
            <person name="Larimer F."/>
            <person name="Land M."/>
            <person name="Hauser L."/>
            <person name="Kyrpides N."/>
            <person name="Lykidis A."/>
            <person name="Borole A.P."/>
        </authorList>
    </citation>
    <scope>NUCLEOTIDE SEQUENCE [LARGE SCALE GENOMIC DNA]</scope>
    <source>
        <strain>ATCC 53993 / BNL-5-31</strain>
    </source>
</reference>
<dbReference type="EMBL" id="CP001132">
    <property type="protein sequence ID" value="ACH84444.1"/>
    <property type="molecule type" value="Genomic_DNA"/>
</dbReference>
<dbReference type="RefSeq" id="WP_012537292.1">
    <property type="nucleotide sequence ID" value="NC_011206.1"/>
</dbReference>
<dbReference type="SMR" id="B5EN55"/>
<dbReference type="GeneID" id="65281662"/>
<dbReference type="KEGG" id="afe:Lferr_2241"/>
<dbReference type="eggNOG" id="COG0291">
    <property type="taxonomic scope" value="Bacteria"/>
</dbReference>
<dbReference type="HOGENOM" id="CLU_169643_4_3_6"/>
<dbReference type="GO" id="GO:0022625">
    <property type="term" value="C:cytosolic large ribosomal subunit"/>
    <property type="evidence" value="ECO:0007669"/>
    <property type="project" value="TreeGrafter"/>
</dbReference>
<dbReference type="GO" id="GO:0003735">
    <property type="term" value="F:structural constituent of ribosome"/>
    <property type="evidence" value="ECO:0007669"/>
    <property type="project" value="InterPro"/>
</dbReference>
<dbReference type="GO" id="GO:0006412">
    <property type="term" value="P:translation"/>
    <property type="evidence" value="ECO:0007669"/>
    <property type="project" value="UniProtKB-UniRule"/>
</dbReference>
<dbReference type="FunFam" id="4.10.410.60:FF:000001">
    <property type="entry name" value="50S ribosomal protein L35"/>
    <property type="match status" value="1"/>
</dbReference>
<dbReference type="Gene3D" id="4.10.410.60">
    <property type="match status" value="1"/>
</dbReference>
<dbReference type="HAMAP" id="MF_00514">
    <property type="entry name" value="Ribosomal_bL35"/>
    <property type="match status" value="1"/>
</dbReference>
<dbReference type="InterPro" id="IPR001706">
    <property type="entry name" value="Ribosomal_bL35"/>
</dbReference>
<dbReference type="InterPro" id="IPR021137">
    <property type="entry name" value="Ribosomal_bL35-like"/>
</dbReference>
<dbReference type="InterPro" id="IPR018265">
    <property type="entry name" value="Ribosomal_bL35_CS"/>
</dbReference>
<dbReference type="InterPro" id="IPR037229">
    <property type="entry name" value="Ribosomal_bL35_sf"/>
</dbReference>
<dbReference type="NCBIfam" id="TIGR00001">
    <property type="entry name" value="rpmI_bact"/>
    <property type="match status" value="1"/>
</dbReference>
<dbReference type="PANTHER" id="PTHR33343">
    <property type="entry name" value="54S RIBOSOMAL PROTEIN BL35M"/>
    <property type="match status" value="1"/>
</dbReference>
<dbReference type="PANTHER" id="PTHR33343:SF1">
    <property type="entry name" value="LARGE RIBOSOMAL SUBUNIT PROTEIN BL35M"/>
    <property type="match status" value="1"/>
</dbReference>
<dbReference type="Pfam" id="PF01632">
    <property type="entry name" value="Ribosomal_L35p"/>
    <property type="match status" value="1"/>
</dbReference>
<dbReference type="PRINTS" id="PR00064">
    <property type="entry name" value="RIBOSOMALL35"/>
</dbReference>
<dbReference type="SUPFAM" id="SSF143034">
    <property type="entry name" value="L35p-like"/>
    <property type="match status" value="1"/>
</dbReference>
<dbReference type="PROSITE" id="PS00936">
    <property type="entry name" value="RIBOSOMAL_L35"/>
    <property type="match status" value="1"/>
</dbReference>
<proteinExistence type="inferred from homology"/>
<feature type="chain" id="PRO_1000127296" description="Large ribosomal subunit protein bL35">
    <location>
        <begin position="1"/>
        <end position="65"/>
    </location>
</feature>
<feature type="region of interest" description="Disordered" evidence="2">
    <location>
        <begin position="1"/>
        <end position="23"/>
    </location>
</feature>
<feature type="compositionally biased region" description="Basic residues" evidence="2">
    <location>
        <begin position="10"/>
        <end position="23"/>
    </location>
</feature>
<accession>B5EN55</accession>
<evidence type="ECO:0000255" key="1">
    <source>
        <dbReference type="HAMAP-Rule" id="MF_00514"/>
    </source>
</evidence>
<evidence type="ECO:0000256" key="2">
    <source>
        <dbReference type="SAM" id="MobiDB-lite"/>
    </source>
</evidence>
<evidence type="ECO:0000305" key="3"/>
<organism>
    <name type="scientific">Acidithiobacillus ferrooxidans (strain ATCC 53993 / BNL-5-31)</name>
    <name type="common">Leptospirillum ferrooxidans (ATCC 53993)</name>
    <dbReference type="NCBI Taxonomy" id="380394"/>
    <lineage>
        <taxon>Bacteria</taxon>
        <taxon>Pseudomonadati</taxon>
        <taxon>Pseudomonadota</taxon>
        <taxon>Acidithiobacillia</taxon>
        <taxon>Acidithiobacillales</taxon>
        <taxon>Acidithiobacillaceae</taxon>
        <taxon>Acidithiobacillus</taxon>
    </lineage>
</organism>